<reference key="1">
    <citation type="journal article" date="2009" name="Mol. Biol. Evol.">
        <title>Molecular evolution, functional variation, and proposed nomenclature of the gene family that includes sphingomyelinase D in sicariid spider venoms.</title>
        <authorList>
            <person name="Binford G.J."/>
            <person name="Bodner M.R."/>
            <person name="Cordes M.H."/>
            <person name="Baldwin K.L."/>
            <person name="Rynerson M.R."/>
            <person name="Burns S.N."/>
            <person name="Zobel-Thropp P.A."/>
        </authorList>
    </citation>
    <scope>NUCLEOTIDE SEQUENCE [MRNA]</scope>
    <scope>NOMENCLATURE</scope>
    <source>
        <tissue>Venom gland</tissue>
    </source>
</reference>
<keyword id="KW-0204">Cytolysis</keyword>
<keyword id="KW-1061">Dermonecrotic toxin</keyword>
<keyword id="KW-1015">Disulfide bond</keyword>
<keyword id="KW-0325">Glycoprotein</keyword>
<keyword id="KW-0354">Hemolysis</keyword>
<keyword id="KW-0442">Lipid degradation</keyword>
<keyword id="KW-0443">Lipid metabolism</keyword>
<keyword id="KW-0456">Lyase</keyword>
<keyword id="KW-0460">Magnesium</keyword>
<keyword id="KW-0479">Metal-binding</keyword>
<keyword id="KW-0964">Secreted</keyword>
<keyword id="KW-0800">Toxin</keyword>
<comment type="function">
    <text evidence="1 3">Dermonecrotic toxins cleave the phosphodiester linkage between the phosphate and headgroup of certain phospholipids (sphingolipid and lysolipid substrates), forming an alcohol (often choline) and a cyclic phosphate (By similarity). This toxin acts on sphingomyelin (SM) (By similarity). It may also act on ceramide phosphoethanolamine (CPE), lysophosphatidylcholine (LPC) and lysophosphatidylethanolamine (LPE), but not on lysophosphatidylserine (LPS), and lysophosphatidylglycerol (LPG) (By similarity). It acts by transphosphatidylation, releasing exclusively cyclic phosphate products as second products (By similarity). Induces dermonecrosis, hemolysis, increased vascular permeability, edema, inflammatory response, and platelet aggregation (By similarity).</text>
</comment>
<comment type="catalytic activity">
    <reaction evidence="1">
        <text>an N-(acyl)-sphingosylphosphocholine = an N-(acyl)-sphingosyl-1,3-cyclic phosphate + choline</text>
        <dbReference type="Rhea" id="RHEA:60652"/>
        <dbReference type="ChEBI" id="CHEBI:15354"/>
        <dbReference type="ChEBI" id="CHEBI:64583"/>
        <dbReference type="ChEBI" id="CHEBI:143892"/>
    </reaction>
</comment>
<comment type="catalytic activity">
    <reaction evidence="1">
        <text>an N-(acyl)-sphingosylphosphoethanolamine = an N-(acyl)-sphingosyl-1,3-cyclic phosphate + ethanolamine</text>
        <dbReference type="Rhea" id="RHEA:60648"/>
        <dbReference type="ChEBI" id="CHEBI:57603"/>
        <dbReference type="ChEBI" id="CHEBI:143891"/>
        <dbReference type="ChEBI" id="CHEBI:143892"/>
    </reaction>
</comment>
<comment type="catalytic activity">
    <reaction evidence="1">
        <text>a 1-acyl-sn-glycero-3-phosphocholine = a 1-acyl-sn-glycero-2,3-cyclic phosphate + choline</text>
        <dbReference type="Rhea" id="RHEA:60700"/>
        <dbReference type="ChEBI" id="CHEBI:15354"/>
        <dbReference type="ChEBI" id="CHEBI:58168"/>
        <dbReference type="ChEBI" id="CHEBI:143947"/>
    </reaction>
</comment>
<comment type="catalytic activity">
    <reaction evidence="1">
        <text>a 1-acyl-sn-glycero-3-phosphoethanolamine = a 1-acyl-sn-glycero-2,3-cyclic phosphate + ethanolamine</text>
        <dbReference type="Rhea" id="RHEA:60704"/>
        <dbReference type="ChEBI" id="CHEBI:57603"/>
        <dbReference type="ChEBI" id="CHEBI:64381"/>
        <dbReference type="ChEBI" id="CHEBI:143947"/>
    </reaction>
</comment>
<comment type="cofactor">
    <cofactor evidence="5">
        <name>Mg(2+)</name>
        <dbReference type="ChEBI" id="CHEBI:18420"/>
    </cofactor>
    <text evidence="5">Binds 1 Mg(2+) ion per subunit.</text>
</comment>
<comment type="subcellular location">
    <subcellularLocation>
        <location evidence="9">Secreted</location>
    </subcellularLocation>
</comment>
<comment type="tissue specificity">
    <text evidence="9">Expressed by the venom gland.</text>
</comment>
<comment type="similarity">
    <text evidence="8">Belongs to the arthropod phospholipase D family. Class II subfamily.</text>
</comment>
<comment type="caution">
    <text evidence="1 2 4">The most common activity assay for dermonecrotic toxins detects enzymatic activity by monitoring choline release from substrate. Liberation of choline from sphingomyelin (SM) or lysophosphatidylcholine (LPC) is commonly assumed to result from substrate hydrolysis, giving either ceramide-1-phosphate (C1P) or lysophosphatidic acid (LPA), respectively, as a second product. However, two studies from Lajoie and colleagues (2013 and 2015) report the observation of exclusive formation of cyclic phosphate products as second products, resulting from intramolecular transphosphatidylation. Cyclic phosphates have vastly different biological properties from their monoester counterparts, and they may be relevant to the pathology of brown spider envenomation.</text>
</comment>
<dbReference type="EC" id="4.6.1.-" evidence="4"/>
<dbReference type="EMBL" id="FJ171390">
    <property type="protein sequence ID" value="ACN48886.1"/>
    <property type="molecule type" value="mRNA"/>
</dbReference>
<dbReference type="SMR" id="C0JAV5"/>
<dbReference type="GO" id="GO:0005576">
    <property type="term" value="C:extracellular region"/>
    <property type="evidence" value="ECO:0007669"/>
    <property type="project" value="UniProtKB-SubCell"/>
</dbReference>
<dbReference type="GO" id="GO:0016829">
    <property type="term" value="F:lyase activity"/>
    <property type="evidence" value="ECO:0007669"/>
    <property type="project" value="UniProtKB-KW"/>
</dbReference>
<dbReference type="GO" id="GO:0046872">
    <property type="term" value="F:metal ion binding"/>
    <property type="evidence" value="ECO:0007669"/>
    <property type="project" value="UniProtKB-KW"/>
</dbReference>
<dbReference type="GO" id="GO:0008081">
    <property type="term" value="F:phosphoric diester hydrolase activity"/>
    <property type="evidence" value="ECO:0007669"/>
    <property type="project" value="InterPro"/>
</dbReference>
<dbReference type="GO" id="GO:0090729">
    <property type="term" value="F:toxin activity"/>
    <property type="evidence" value="ECO:0007669"/>
    <property type="project" value="UniProtKB-KW"/>
</dbReference>
<dbReference type="GO" id="GO:0031640">
    <property type="term" value="P:killing of cells of another organism"/>
    <property type="evidence" value="ECO:0007669"/>
    <property type="project" value="UniProtKB-KW"/>
</dbReference>
<dbReference type="GO" id="GO:0016042">
    <property type="term" value="P:lipid catabolic process"/>
    <property type="evidence" value="ECO:0007669"/>
    <property type="project" value="UniProtKB-KW"/>
</dbReference>
<dbReference type="CDD" id="cd08576">
    <property type="entry name" value="GDPD_like_SMaseD_PLD"/>
    <property type="match status" value="1"/>
</dbReference>
<dbReference type="Gene3D" id="3.20.20.190">
    <property type="entry name" value="Phosphatidylinositol (PI) phosphodiesterase"/>
    <property type="match status" value="1"/>
</dbReference>
<dbReference type="InterPro" id="IPR017946">
    <property type="entry name" value="PLC-like_Pdiesterase_TIM-brl"/>
</dbReference>
<dbReference type="Pfam" id="PF13653">
    <property type="entry name" value="GDPD_2"/>
    <property type="match status" value="1"/>
</dbReference>
<dbReference type="SUPFAM" id="SSF51695">
    <property type="entry name" value="PLC-like phosphodiesterases"/>
    <property type="match status" value="1"/>
</dbReference>
<protein>
    <recommendedName>
        <fullName evidence="7">Dermonecrotic toxin LapSicTox-alphaIB1aiii</fullName>
        <ecNumber evidence="4">4.6.1.-</ecNumber>
    </recommendedName>
    <alternativeName>
        <fullName>Phospholipase D</fullName>
        <shortName>PLD</shortName>
    </alternativeName>
    <alternativeName>
        <fullName>Sphingomyelin phosphodiesterase D</fullName>
        <shortName>SMD</shortName>
        <shortName>SMase D</shortName>
        <shortName>Sphingomyelinase D</shortName>
    </alternativeName>
</protein>
<accession>C0JAV5</accession>
<proteinExistence type="evidence at transcript level"/>
<evidence type="ECO:0000250" key="1">
    <source>
        <dbReference type="UniProtKB" id="A0A0D4WTV1"/>
    </source>
</evidence>
<evidence type="ECO:0000250" key="2">
    <source>
        <dbReference type="UniProtKB" id="A0A0D4WV12"/>
    </source>
</evidence>
<evidence type="ECO:0000250" key="3">
    <source>
        <dbReference type="UniProtKB" id="P0CE80"/>
    </source>
</evidence>
<evidence type="ECO:0000250" key="4">
    <source>
        <dbReference type="UniProtKB" id="Q4ZFU2"/>
    </source>
</evidence>
<evidence type="ECO:0000250" key="5">
    <source>
        <dbReference type="UniProtKB" id="Q8I914"/>
    </source>
</evidence>
<evidence type="ECO:0000255" key="6"/>
<evidence type="ECO:0000303" key="7">
    <source>
    </source>
</evidence>
<evidence type="ECO:0000305" key="8"/>
<evidence type="ECO:0000305" key="9">
    <source>
    </source>
</evidence>
<organism>
    <name type="scientific">Loxosceles apachea</name>
    <name type="common">Apache recluse spider</name>
    <dbReference type="NCBI Taxonomy" id="571518"/>
    <lineage>
        <taxon>Eukaryota</taxon>
        <taxon>Metazoa</taxon>
        <taxon>Ecdysozoa</taxon>
        <taxon>Arthropoda</taxon>
        <taxon>Chelicerata</taxon>
        <taxon>Arachnida</taxon>
        <taxon>Araneae</taxon>
        <taxon>Araneomorphae</taxon>
        <taxon>Haplogynae</taxon>
        <taxon>Scytodoidea</taxon>
        <taxon>Sicariidae</taxon>
        <taxon>Loxosceles</taxon>
    </lineage>
</organism>
<sequence length="273" mass="30465">WIMGHMVNAIAQIDEFVNLGANSIETDVSFDSSANPEYTYHGVPCDCGRTCTKWEHFNEFLKGLRKATTPGDSKYHEKLVLVVFDLKTDSLYDNQASDAGKKLAKSLLQNYWNNGNNGGRAYIVLSIPNLAHYKLITGFKEALTSEGHPELMDKVGYDFSGNDDIGDVANAYKKAGVTGHVWQSDGITNCLLRGLDRVRKAVANRDSSSGYINKVYYWTVDKRQSTRDALDAGVDGIMTNYPDVIADVLNESAYKAKFRIASYDDNPWETFKN</sequence>
<feature type="chain" id="PRO_0000392770" description="Dermonecrotic toxin LapSicTox-alphaIB1aiii">
    <location>
        <begin position="1" status="less than"/>
        <end position="273"/>
    </location>
</feature>
<feature type="active site" evidence="5">
    <location>
        <position position="5"/>
    </location>
</feature>
<feature type="active site" description="Nucleophile" evidence="5">
    <location>
        <position position="41"/>
    </location>
</feature>
<feature type="binding site" evidence="5">
    <location>
        <position position="25"/>
    </location>
    <ligand>
        <name>Mg(2+)</name>
        <dbReference type="ChEBI" id="CHEBI:18420"/>
    </ligand>
</feature>
<feature type="binding site" evidence="5">
    <location>
        <position position="27"/>
    </location>
    <ligand>
        <name>Mg(2+)</name>
        <dbReference type="ChEBI" id="CHEBI:18420"/>
    </ligand>
</feature>
<feature type="binding site" evidence="5">
    <location>
        <position position="85"/>
    </location>
    <ligand>
        <name>Mg(2+)</name>
        <dbReference type="ChEBI" id="CHEBI:18420"/>
    </ligand>
</feature>
<feature type="glycosylation site" description="N-linked (GlcNAc...) asparagine" evidence="6">
    <location>
        <position position="250"/>
    </location>
</feature>
<feature type="disulfide bond" evidence="3">
    <location>
        <begin position="45"/>
        <end position="51"/>
    </location>
</feature>
<feature type="disulfide bond" evidence="3">
    <location>
        <begin position="47"/>
        <end position="190"/>
    </location>
</feature>
<feature type="non-terminal residue">
    <location>
        <position position="1"/>
    </location>
</feature>
<name>A1KA3_LOXAP</name>